<reference key="1">
    <citation type="journal article" date="2009" name="Stand. Genomic Sci.">
        <title>Complete genome sequence of Methanocorpusculum labreanum type strain Z.</title>
        <authorList>
            <person name="Anderson I.J."/>
            <person name="Sieprawska-Lupa M."/>
            <person name="Goltsman E."/>
            <person name="Lapidus A."/>
            <person name="Copeland A."/>
            <person name="Glavina Del Rio T."/>
            <person name="Tice H."/>
            <person name="Dalin E."/>
            <person name="Barry K."/>
            <person name="Pitluck S."/>
            <person name="Hauser L."/>
            <person name="Land M."/>
            <person name="Lucas S."/>
            <person name="Richardson P."/>
            <person name="Whitman W.B."/>
            <person name="Kyrpides N.C."/>
        </authorList>
    </citation>
    <scope>NUCLEOTIDE SEQUENCE [LARGE SCALE GENOMIC DNA]</scope>
    <source>
        <strain>ATCC 43576 / DSM 4855 / Z</strain>
    </source>
</reference>
<dbReference type="EMBL" id="CP000559">
    <property type="protein sequence ID" value="ABN07388.1"/>
    <property type="molecule type" value="Genomic_DNA"/>
</dbReference>
<dbReference type="RefSeq" id="WP_011833591.1">
    <property type="nucleotide sequence ID" value="NC_008942.1"/>
</dbReference>
<dbReference type="SMR" id="A2SST2"/>
<dbReference type="STRING" id="410358.Mlab_1219"/>
<dbReference type="GeneID" id="4796079"/>
<dbReference type="KEGG" id="mla:Mlab_1219"/>
<dbReference type="eggNOG" id="arCOG00869">
    <property type="taxonomic scope" value="Archaea"/>
</dbReference>
<dbReference type="HOGENOM" id="CLU_120786_0_0_2"/>
<dbReference type="OrthoDB" id="4691at2157"/>
<dbReference type="Proteomes" id="UP000000365">
    <property type="component" value="Chromosome"/>
</dbReference>
<dbReference type="GO" id="GO:0005886">
    <property type="term" value="C:plasma membrane"/>
    <property type="evidence" value="ECO:0007669"/>
    <property type="project" value="UniProtKB-SubCell"/>
</dbReference>
<dbReference type="GO" id="GO:0033178">
    <property type="term" value="C:proton-transporting two-sector ATPase complex, catalytic domain"/>
    <property type="evidence" value="ECO:0007669"/>
    <property type="project" value="InterPro"/>
</dbReference>
<dbReference type="GO" id="GO:0005524">
    <property type="term" value="F:ATP binding"/>
    <property type="evidence" value="ECO:0007669"/>
    <property type="project" value="UniProtKB-UniRule"/>
</dbReference>
<dbReference type="GO" id="GO:0046933">
    <property type="term" value="F:proton-transporting ATP synthase activity, rotational mechanism"/>
    <property type="evidence" value="ECO:0007669"/>
    <property type="project" value="UniProtKB-UniRule"/>
</dbReference>
<dbReference type="GO" id="GO:0046961">
    <property type="term" value="F:proton-transporting ATPase activity, rotational mechanism"/>
    <property type="evidence" value="ECO:0007669"/>
    <property type="project" value="InterPro"/>
</dbReference>
<dbReference type="GO" id="GO:0042777">
    <property type="term" value="P:proton motive force-driven plasma membrane ATP synthesis"/>
    <property type="evidence" value="ECO:0007669"/>
    <property type="project" value="UniProtKB-UniRule"/>
</dbReference>
<dbReference type="Gene3D" id="3.30.2320.30">
    <property type="entry name" value="ATP synthase, E subunit, C-terminal"/>
    <property type="match status" value="1"/>
</dbReference>
<dbReference type="Gene3D" id="1.20.5.620">
    <property type="entry name" value="F1F0 ATP synthase subunit B, membrane domain"/>
    <property type="match status" value="1"/>
</dbReference>
<dbReference type="HAMAP" id="MF_00311">
    <property type="entry name" value="ATP_synth_E_arch"/>
    <property type="match status" value="1"/>
</dbReference>
<dbReference type="InterPro" id="IPR038495">
    <property type="entry name" value="ATPase_E_C"/>
</dbReference>
<dbReference type="InterPro" id="IPR002842">
    <property type="entry name" value="ATPase_V1_Esu"/>
</dbReference>
<dbReference type="Pfam" id="PF01991">
    <property type="entry name" value="vATP-synt_E"/>
    <property type="match status" value="1"/>
</dbReference>
<dbReference type="SUPFAM" id="SSF160527">
    <property type="entry name" value="V-type ATPase subunit E-like"/>
    <property type="match status" value="1"/>
</dbReference>
<sequence>MGLEVVVDEIKAKGDREAAAIKAAAEAQAKEIVNEANLRANEIRLAAEKDADTQADRIMIREVASANLVVKRDFLNAQKELLDKVYTSAAEEIANLPADVHAKAVRELLKESAKQIKAGVVFTNARDEKAAKEAISGLKTLSGFTFGGITDIAGGVVVQSTDGQLTLDFSYQTFMGEVWETSLKDASEILFG</sequence>
<organism>
    <name type="scientific">Methanocorpusculum labreanum (strain ATCC 43576 / DSM 4855 / Z)</name>
    <dbReference type="NCBI Taxonomy" id="410358"/>
    <lineage>
        <taxon>Archaea</taxon>
        <taxon>Methanobacteriati</taxon>
        <taxon>Methanobacteriota</taxon>
        <taxon>Stenosarchaea group</taxon>
        <taxon>Methanomicrobia</taxon>
        <taxon>Methanomicrobiales</taxon>
        <taxon>Methanocorpusculaceae</taxon>
        <taxon>Methanocorpusculum</taxon>
    </lineage>
</organism>
<protein>
    <recommendedName>
        <fullName evidence="1">A-type ATP synthase subunit E</fullName>
    </recommendedName>
</protein>
<name>AATE_METLZ</name>
<keyword id="KW-0066">ATP synthesis</keyword>
<keyword id="KW-1003">Cell membrane</keyword>
<keyword id="KW-0375">Hydrogen ion transport</keyword>
<keyword id="KW-0406">Ion transport</keyword>
<keyword id="KW-0472">Membrane</keyword>
<keyword id="KW-1185">Reference proteome</keyword>
<keyword id="KW-0813">Transport</keyword>
<feature type="chain" id="PRO_0000322530" description="A-type ATP synthase subunit E">
    <location>
        <begin position="1"/>
        <end position="192"/>
    </location>
</feature>
<comment type="function">
    <text evidence="1">Component of the A-type ATP synthase that produces ATP from ADP in the presence of a proton gradient across the membrane.</text>
</comment>
<comment type="subunit">
    <text evidence="1">Has multiple subunits with at least A(3), B(3), C, D, E, F, H, I and proteolipid K(x).</text>
</comment>
<comment type="subcellular location">
    <subcellularLocation>
        <location evidence="1">Cell membrane</location>
        <topology evidence="1">Peripheral membrane protein</topology>
    </subcellularLocation>
</comment>
<comment type="similarity">
    <text evidence="1">Belongs to the V-ATPase E subunit family.</text>
</comment>
<accession>A2SST2</accession>
<gene>
    <name evidence="1" type="primary">atpE</name>
    <name type="ordered locus">Mlab_1219</name>
</gene>
<evidence type="ECO:0000255" key="1">
    <source>
        <dbReference type="HAMAP-Rule" id="MF_00311"/>
    </source>
</evidence>
<proteinExistence type="inferred from homology"/>